<comment type="function">
    <text evidence="1">Produces ATP from ADP in the presence of a proton gradient across the membrane. The alpha chain is a regulatory subunit.</text>
</comment>
<comment type="catalytic activity">
    <reaction evidence="1">
        <text>ATP + H2O + 4 H(+)(in) = ADP + phosphate + 5 H(+)(out)</text>
        <dbReference type="Rhea" id="RHEA:57720"/>
        <dbReference type="ChEBI" id="CHEBI:15377"/>
        <dbReference type="ChEBI" id="CHEBI:15378"/>
        <dbReference type="ChEBI" id="CHEBI:30616"/>
        <dbReference type="ChEBI" id="CHEBI:43474"/>
        <dbReference type="ChEBI" id="CHEBI:456216"/>
        <dbReference type="EC" id="7.1.2.2"/>
    </reaction>
</comment>
<comment type="subunit">
    <text evidence="1">F-type ATPases have 2 components, CF(1) - the catalytic core - and CF(0) - the membrane proton channel. CF(1) has five subunits: alpha(3), beta(3), gamma(1), delta(1), epsilon(1). CF(0) has three main subunits: a(1), b(2) and c(9-12). The alpha and beta chains form an alternating ring which encloses part of the gamma chain. CF(1) is attached to CF(0) by a central stalk formed by the gamma and epsilon chains, while a peripheral stalk is formed by the delta and b chains.</text>
</comment>
<comment type="subcellular location">
    <subcellularLocation>
        <location evidence="1">Cell inner membrane</location>
        <topology evidence="1">Peripheral membrane protein</topology>
    </subcellularLocation>
</comment>
<comment type="similarity">
    <text evidence="1">Belongs to the ATPase alpha/beta chains family.</text>
</comment>
<accession>B2I862</accession>
<organism>
    <name type="scientific">Xylella fastidiosa (strain M23)</name>
    <dbReference type="NCBI Taxonomy" id="405441"/>
    <lineage>
        <taxon>Bacteria</taxon>
        <taxon>Pseudomonadati</taxon>
        <taxon>Pseudomonadota</taxon>
        <taxon>Gammaproteobacteria</taxon>
        <taxon>Lysobacterales</taxon>
        <taxon>Lysobacteraceae</taxon>
        <taxon>Xylella</taxon>
    </lineage>
</organism>
<evidence type="ECO:0000255" key="1">
    <source>
        <dbReference type="HAMAP-Rule" id="MF_01346"/>
    </source>
</evidence>
<feature type="chain" id="PRO_1000143455" description="ATP synthase subunit alpha">
    <location>
        <begin position="1"/>
        <end position="515"/>
    </location>
</feature>
<feature type="binding site" evidence="1">
    <location>
        <begin position="171"/>
        <end position="178"/>
    </location>
    <ligand>
        <name>ATP</name>
        <dbReference type="ChEBI" id="CHEBI:30616"/>
    </ligand>
</feature>
<feature type="site" description="Required for activity" evidence="1">
    <location>
        <position position="375"/>
    </location>
</feature>
<protein>
    <recommendedName>
        <fullName evidence="1">ATP synthase subunit alpha</fullName>
        <ecNumber evidence="1">7.1.2.2</ecNumber>
    </recommendedName>
    <alternativeName>
        <fullName evidence="1">ATP synthase F1 sector subunit alpha</fullName>
    </alternativeName>
    <alternativeName>
        <fullName evidence="1">F-ATPase subunit alpha</fullName>
    </alternativeName>
</protein>
<proteinExistence type="inferred from homology"/>
<keyword id="KW-0066">ATP synthesis</keyword>
<keyword id="KW-0067">ATP-binding</keyword>
<keyword id="KW-0997">Cell inner membrane</keyword>
<keyword id="KW-1003">Cell membrane</keyword>
<keyword id="KW-0139">CF(1)</keyword>
<keyword id="KW-0375">Hydrogen ion transport</keyword>
<keyword id="KW-0406">Ion transport</keyword>
<keyword id="KW-0472">Membrane</keyword>
<keyword id="KW-0547">Nucleotide-binding</keyword>
<keyword id="KW-1278">Translocase</keyword>
<keyword id="KW-0813">Transport</keyword>
<dbReference type="EC" id="7.1.2.2" evidence="1"/>
<dbReference type="EMBL" id="CP001011">
    <property type="protein sequence ID" value="ACB91873.1"/>
    <property type="molecule type" value="Genomic_DNA"/>
</dbReference>
<dbReference type="RefSeq" id="WP_011097645.1">
    <property type="nucleotide sequence ID" value="NC_010577.1"/>
</dbReference>
<dbReference type="SMR" id="B2I862"/>
<dbReference type="KEGG" id="xfn:XfasM23_0426"/>
<dbReference type="HOGENOM" id="CLU_010091_2_1_6"/>
<dbReference type="Proteomes" id="UP000001698">
    <property type="component" value="Chromosome"/>
</dbReference>
<dbReference type="GO" id="GO:0005886">
    <property type="term" value="C:plasma membrane"/>
    <property type="evidence" value="ECO:0007669"/>
    <property type="project" value="UniProtKB-SubCell"/>
</dbReference>
<dbReference type="GO" id="GO:0045259">
    <property type="term" value="C:proton-transporting ATP synthase complex"/>
    <property type="evidence" value="ECO:0007669"/>
    <property type="project" value="UniProtKB-KW"/>
</dbReference>
<dbReference type="GO" id="GO:0043531">
    <property type="term" value="F:ADP binding"/>
    <property type="evidence" value="ECO:0007669"/>
    <property type="project" value="TreeGrafter"/>
</dbReference>
<dbReference type="GO" id="GO:0005524">
    <property type="term" value="F:ATP binding"/>
    <property type="evidence" value="ECO:0007669"/>
    <property type="project" value="UniProtKB-UniRule"/>
</dbReference>
<dbReference type="GO" id="GO:0046933">
    <property type="term" value="F:proton-transporting ATP synthase activity, rotational mechanism"/>
    <property type="evidence" value="ECO:0007669"/>
    <property type="project" value="UniProtKB-UniRule"/>
</dbReference>
<dbReference type="CDD" id="cd18113">
    <property type="entry name" value="ATP-synt_F1_alpha_C"/>
    <property type="match status" value="1"/>
</dbReference>
<dbReference type="CDD" id="cd18116">
    <property type="entry name" value="ATP-synt_F1_alpha_N"/>
    <property type="match status" value="1"/>
</dbReference>
<dbReference type="CDD" id="cd01132">
    <property type="entry name" value="F1-ATPase_alpha_CD"/>
    <property type="match status" value="1"/>
</dbReference>
<dbReference type="FunFam" id="1.20.150.20:FF:000001">
    <property type="entry name" value="ATP synthase subunit alpha"/>
    <property type="match status" value="1"/>
</dbReference>
<dbReference type="FunFam" id="2.40.30.20:FF:000001">
    <property type="entry name" value="ATP synthase subunit alpha"/>
    <property type="match status" value="1"/>
</dbReference>
<dbReference type="FunFam" id="3.40.50.300:FF:000002">
    <property type="entry name" value="ATP synthase subunit alpha"/>
    <property type="match status" value="1"/>
</dbReference>
<dbReference type="Gene3D" id="2.40.30.20">
    <property type="match status" value="1"/>
</dbReference>
<dbReference type="Gene3D" id="1.20.150.20">
    <property type="entry name" value="ATP synthase alpha/beta chain, C-terminal domain"/>
    <property type="match status" value="1"/>
</dbReference>
<dbReference type="Gene3D" id="3.40.50.300">
    <property type="entry name" value="P-loop containing nucleotide triphosphate hydrolases"/>
    <property type="match status" value="1"/>
</dbReference>
<dbReference type="HAMAP" id="MF_01346">
    <property type="entry name" value="ATP_synth_alpha_bact"/>
    <property type="match status" value="1"/>
</dbReference>
<dbReference type="InterPro" id="IPR023366">
    <property type="entry name" value="ATP_synth_asu-like_sf"/>
</dbReference>
<dbReference type="InterPro" id="IPR000793">
    <property type="entry name" value="ATP_synth_asu_C"/>
</dbReference>
<dbReference type="InterPro" id="IPR038376">
    <property type="entry name" value="ATP_synth_asu_C_sf"/>
</dbReference>
<dbReference type="InterPro" id="IPR033732">
    <property type="entry name" value="ATP_synth_F1_a_nt-bd_dom"/>
</dbReference>
<dbReference type="InterPro" id="IPR005294">
    <property type="entry name" value="ATP_synth_F1_asu"/>
</dbReference>
<dbReference type="InterPro" id="IPR020003">
    <property type="entry name" value="ATPase_a/bsu_AS"/>
</dbReference>
<dbReference type="InterPro" id="IPR004100">
    <property type="entry name" value="ATPase_F1/V1/A1_a/bsu_N"/>
</dbReference>
<dbReference type="InterPro" id="IPR036121">
    <property type="entry name" value="ATPase_F1/V1/A1_a/bsu_N_sf"/>
</dbReference>
<dbReference type="InterPro" id="IPR000194">
    <property type="entry name" value="ATPase_F1/V1/A1_a/bsu_nucl-bd"/>
</dbReference>
<dbReference type="InterPro" id="IPR027417">
    <property type="entry name" value="P-loop_NTPase"/>
</dbReference>
<dbReference type="NCBIfam" id="TIGR00962">
    <property type="entry name" value="atpA"/>
    <property type="match status" value="1"/>
</dbReference>
<dbReference type="NCBIfam" id="NF009884">
    <property type="entry name" value="PRK13343.1"/>
    <property type="match status" value="1"/>
</dbReference>
<dbReference type="PANTHER" id="PTHR48082">
    <property type="entry name" value="ATP SYNTHASE SUBUNIT ALPHA, MITOCHONDRIAL"/>
    <property type="match status" value="1"/>
</dbReference>
<dbReference type="PANTHER" id="PTHR48082:SF2">
    <property type="entry name" value="ATP SYNTHASE SUBUNIT ALPHA, MITOCHONDRIAL"/>
    <property type="match status" value="1"/>
</dbReference>
<dbReference type="Pfam" id="PF00006">
    <property type="entry name" value="ATP-synt_ab"/>
    <property type="match status" value="1"/>
</dbReference>
<dbReference type="Pfam" id="PF00306">
    <property type="entry name" value="ATP-synt_ab_C"/>
    <property type="match status" value="1"/>
</dbReference>
<dbReference type="Pfam" id="PF02874">
    <property type="entry name" value="ATP-synt_ab_N"/>
    <property type="match status" value="1"/>
</dbReference>
<dbReference type="SUPFAM" id="SSF47917">
    <property type="entry name" value="C-terminal domain of alpha and beta subunits of F1 ATP synthase"/>
    <property type="match status" value="1"/>
</dbReference>
<dbReference type="SUPFAM" id="SSF50615">
    <property type="entry name" value="N-terminal domain of alpha and beta subunits of F1 ATP synthase"/>
    <property type="match status" value="1"/>
</dbReference>
<dbReference type="SUPFAM" id="SSF52540">
    <property type="entry name" value="P-loop containing nucleoside triphosphate hydrolases"/>
    <property type="match status" value="1"/>
</dbReference>
<dbReference type="PROSITE" id="PS00152">
    <property type="entry name" value="ATPASE_ALPHA_BETA"/>
    <property type="match status" value="1"/>
</dbReference>
<sequence length="515" mass="55984">MATTLNPSEISELIKTRIEQVKLSAESRNEGTVTSVSDGIVRIFGLADAMQGEMIELPNKTYALALNLERDSVGAVVLGDYEHLREGDVAKTTGRILEVPVGKSLLGRVVNALGEPIDGKGTLGPTQTAPVERVAPGVIWRKSVDQPVQTGYKSVDAMIPIGRGQRELIIGDRQTGKTAMAIDTVISQKHTGIKCVYVAIGQKSSTIANIVRKLEENDALDHTIVVAATASESAALQYISAYAGCTMGEYFMDRGEDALIIYDDLSKQAVAYRQISLLLKRPPGREAYPGDVFYLHSRLLERAARVSEEYVEKFTQGEVKGKTGSLTALPIIETQAGDVSAFVPTNVISITDGQIFLETDLFNAGIRPAVNAGISVSRVGGSAQTKIIKKLSGGIRISLAQYRELAAFAQFASDLDETTRKQLERGQRVTELMKQKQYTSMSVANQALSIYAVSEGYLDDIPVHKVLTFEEGLHAHFSNTQGALIDKINNSGDWDNNIEAAFKQHIEEFKTTGSW</sequence>
<reference key="1">
    <citation type="journal article" date="2010" name="J. Bacteriol.">
        <title>Whole genome sequences of two Xylella fastidiosa strains (M12 and M23) causing almond leaf scorch disease in California.</title>
        <authorList>
            <person name="Chen J."/>
            <person name="Xie G."/>
            <person name="Han S."/>
            <person name="Chertkov O."/>
            <person name="Sims D."/>
            <person name="Civerolo E.L."/>
        </authorList>
    </citation>
    <scope>NUCLEOTIDE SEQUENCE [LARGE SCALE GENOMIC DNA]</scope>
    <source>
        <strain>M23</strain>
    </source>
</reference>
<gene>
    <name evidence="1" type="primary">atpA</name>
    <name type="ordered locus">XfasM23_0426</name>
</gene>
<name>ATPA_XYLF2</name>